<keyword id="KW-0027">Amidation</keyword>
<keyword id="KW-0878">Amphibian defense peptide</keyword>
<keyword id="KW-0929">Antimicrobial</keyword>
<keyword id="KW-0903">Direct protein sequencing</keyword>
<keyword id="KW-0964">Secreted</keyword>
<organism evidence="3">
    <name type="scientific">Phyllomedusa trinitatis</name>
    <name type="common">Trinidad leaf frog</name>
    <dbReference type="NCBI Taxonomy" id="332092"/>
    <lineage>
        <taxon>Eukaryota</taxon>
        <taxon>Metazoa</taxon>
        <taxon>Chordata</taxon>
        <taxon>Craniata</taxon>
        <taxon>Vertebrata</taxon>
        <taxon>Euteleostomi</taxon>
        <taxon>Amphibia</taxon>
        <taxon>Batrachia</taxon>
        <taxon>Anura</taxon>
        <taxon>Neobatrachia</taxon>
        <taxon>Hyloidea</taxon>
        <taxon>Hylidae</taxon>
        <taxon>Phyllomedusinae</taxon>
        <taxon>Phyllomedusa</taxon>
    </lineage>
</organism>
<proteinExistence type="evidence at protein level"/>
<comment type="function">
    <text evidence="1">Has antimicrobial activity.</text>
</comment>
<comment type="subcellular location">
    <subcellularLocation>
        <location evidence="2">Secreted</location>
    </subcellularLocation>
</comment>
<comment type="tissue specificity">
    <text evidence="5">Expressed by the skin glands.</text>
</comment>
<comment type="mass spectrometry" mass="3145.1" method="MALDI" evidence="2"/>
<comment type="similarity">
    <text evidence="4">Belongs to the frog skin active peptide (FSAP) family. Dermaseptin subfamily.</text>
</comment>
<name>DRS71_PHYTB</name>
<feature type="peptide" id="PRO_0000445220" description="Dermaseptin-7.1TR" evidence="2">
    <location>
        <begin position="1"/>
        <end position="31"/>
    </location>
</feature>
<feature type="modified residue" description="Glutamine amide" evidence="2">
    <location>
        <position position="31"/>
    </location>
</feature>
<accession>C0HLD4</accession>
<protein>
    <recommendedName>
        <fullName evidence="3">Dermaseptin-7.1TR</fullName>
    </recommendedName>
</protein>
<evidence type="ECO:0000250" key="1">
    <source>
        <dbReference type="UniProtKB" id="P84927"/>
    </source>
</evidence>
<evidence type="ECO:0000269" key="2">
    <source>
    </source>
</evidence>
<evidence type="ECO:0000303" key="3">
    <source>
    </source>
</evidence>
<evidence type="ECO:0000305" key="4"/>
<evidence type="ECO:0000305" key="5">
    <source>
    </source>
</evidence>
<dbReference type="GO" id="GO:0005576">
    <property type="term" value="C:extracellular region"/>
    <property type="evidence" value="ECO:0007669"/>
    <property type="project" value="UniProtKB-SubCell"/>
</dbReference>
<dbReference type="GO" id="GO:0006952">
    <property type="term" value="P:defense response"/>
    <property type="evidence" value="ECO:0007669"/>
    <property type="project" value="UniProtKB-KW"/>
</dbReference>
<dbReference type="InterPro" id="IPR022731">
    <property type="entry name" value="Dermaseptin_dom"/>
</dbReference>
<dbReference type="Pfam" id="PF12121">
    <property type="entry name" value="DD_K"/>
    <property type="match status" value="1"/>
</dbReference>
<reference evidence="4" key="1">
    <citation type="journal article" date="2018" name="Comp. Biochem. Physiol.">
        <title>Peptidomic analysis of the host-defense peptides in skin secretions of the Trinidadian leaf frog Phyllomedusa trinitatis (Phyllomedusidae).</title>
        <authorList>
            <person name="Mechkarska M."/>
            <person name="Coquet L."/>
            <person name="Leprince J."/>
            <person name="Auguste R.J."/>
            <person name="Jouenne T."/>
            <person name="Mangoni M.L."/>
            <person name="Conlon J.M."/>
        </authorList>
    </citation>
    <scope>PROTEIN SEQUENCE</scope>
    <scope>SUBCELLULAR LOCATION</scope>
    <scope>MASS SPECTROMETRY</scope>
    <scope>AMIDATION AT GLN-31</scope>
    <source>
        <tissue evidence="3">Skin secretion</tissue>
    </source>
</reference>
<sequence length="31" mass="3147">ALWKDVLKKIGTVALHAGKAALGAVADTISQ</sequence>